<proteinExistence type="inferred from homology"/>
<protein>
    <recommendedName>
        <fullName evidence="1">Acetaldehyde dehydrogenase</fullName>
        <ecNumber evidence="1">1.2.1.10</ecNumber>
    </recommendedName>
    <alternativeName>
        <fullName evidence="1">Acetaldehyde dehydrogenase [acetylating]</fullName>
    </alternativeName>
</protein>
<accession>B8GBV4</accession>
<reference key="1">
    <citation type="submission" date="2008-12" db="EMBL/GenBank/DDBJ databases">
        <title>Complete sequence of Chloroflexus aggregans DSM 9485.</title>
        <authorList>
            <consortium name="US DOE Joint Genome Institute"/>
            <person name="Lucas S."/>
            <person name="Copeland A."/>
            <person name="Lapidus A."/>
            <person name="Glavina del Rio T."/>
            <person name="Dalin E."/>
            <person name="Tice H."/>
            <person name="Pitluck S."/>
            <person name="Foster B."/>
            <person name="Larimer F."/>
            <person name="Land M."/>
            <person name="Hauser L."/>
            <person name="Kyrpides N."/>
            <person name="Mikhailova N."/>
            <person name="Bryant D.A."/>
            <person name="Richardson P."/>
        </authorList>
    </citation>
    <scope>NUCLEOTIDE SEQUENCE [LARGE SCALE GENOMIC DNA]</scope>
    <source>
        <strain>MD-66 / DSM 9485</strain>
    </source>
</reference>
<gene>
    <name type="ordered locus">Cagg_2033</name>
</gene>
<keyword id="KW-0058">Aromatic hydrocarbons catabolism</keyword>
<keyword id="KW-0520">NAD</keyword>
<keyword id="KW-0560">Oxidoreductase</keyword>
<evidence type="ECO:0000255" key="1">
    <source>
        <dbReference type="HAMAP-Rule" id="MF_01657"/>
    </source>
</evidence>
<organism>
    <name type="scientific">Chloroflexus aggregans (strain MD-66 / DSM 9485)</name>
    <dbReference type="NCBI Taxonomy" id="326427"/>
    <lineage>
        <taxon>Bacteria</taxon>
        <taxon>Bacillati</taxon>
        <taxon>Chloroflexota</taxon>
        <taxon>Chloroflexia</taxon>
        <taxon>Chloroflexales</taxon>
        <taxon>Chloroflexineae</taxon>
        <taxon>Chloroflexaceae</taxon>
        <taxon>Chloroflexus</taxon>
    </lineage>
</organism>
<feature type="chain" id="PRO_0000387647" description="Acetaldehyde dehydrogenase">
    <location>
        <begin position="1"/>
        <end position="303"/>
    </location>
</feature>
<feature type="active site" description="Acyl-thioester intermediate" evidence="1">
    <location>
        <position position="128"/>
    </location>
</feature>
<feature type="binding site" evidence="1">
    <location>
        <begin position="13"/>
        <end position="16"/>
    </location>
    <ligand>
        <name>NAD(+)</name>
        <dbReference type="ChEBI" id="CHEBI:57540"/>
    </ligand>
</feature>
<feature type="binding site" evidence="1">
    <location>
        <begin position="159"/>
        <end position="167"/>
    </location>
    <ligand>
        <name>NAD(+)</name>
        <dbReference type="ChEBI" id="CHEBI:57540"/>
    </ligand>
</feature>
<feature type="binding site" evidence="1">
    <location>
        <position position="278"/>
    </location>
    <ligand>
        <name>NAD(+)</name>
        <dbReference type="ChEBI" id="CHEBI:57540"/>
    </ligand>
</feature>
<name>ACDH_CHLAD</name>
<comment type="catalytic activity">
    <reaction evidence="1">
        <text>acetaldehyde + NAD(+) + CoA = acetyl-CoA + NADH + H(+)</text>
        <dbReference type="Rhea" id="RHEA:23288"/>
        <dbReference type="ChEBI" id="CHEBI:15343"/>
        <dbReference type="ChEBI" id="CHEBI:15378"/>
        <dbReference type="ChEBI" id="CHEBI:57287"/>
        <dbReference type="ChEBI" id="CHEBI:57288"/>
        <dbReference type="ChEBI" id="CHEBI:57540"/>
        <dbReference type="ChEBI" id="CHEBI:57945"/>
        <dbReference type="EC" id="1.2.1.10"/>
    </reaction>
</comment>
<comment type="similarity">
    <text evidence="1">Belongs to the acetaldehyde dehydrogenase family.</text>
</comment>
<dbReference type="EC" id="1.2.1.10" evidence="1"/>
<dbReference type="EMBL" id="CP001337">
    <property type="protein sequence ID" value="ACL24921.1"/>
    <property type="molecule type" value="Genomic_DNA"/>
</dbReference>
<dbReference type="RefSeq" id="WP_015940780.1">
    <property type="nucleotide sequence ID" value="NC_011831.1"/>
</dbReference>
<dbReference type="SMR" id="B8GBV4"/>
<dbReference type="STRING" id="326427.Cagg_2033"/>
<dbReference type="KEGG" id="cag:Cagg_2033"/>
<dbReference type="eggNOG" id="COG4569">
    <property type="taxonomic scope" value="Bacteria"/>
</dbReference>
<dbReference type="HOGENOM" id="CLU_062208_0_0_0"/>
<dbReference type="OrthoDB" id="9783105at2"/>
<dbReference type="Proteomes" id="UP000002508">
    <property type="component" value="Chromosome"/>
</dbReference>
<dbReference type="GO" id="GO:0008774">
    <property type="term" value="F:acetaldehyde dehydrogenase (acetylating) activity"/>
    <property type="evidence" value="ECO:0007669"/>
    <property type="project" value="UniProtKB-UniRule"/>
</dbReference>
<dbReference type="GO" id="GO:0051287">
    <property type="term" value="F:NAD binding"/>
    <property type="evidence" value="ECO:0007669"/>
    <property type="project" value="UniProtKB-UniRule"/>
</dbReference>
<dbReference type="GO" id="GO:0009056">
    <property type="term" value="P:catabolic process"/>
    <property type="evidence" value="ECO:0007669"/>
    <property type="project" value="UniProtKB-KW"/>
</dbReference>
<dbReference type="CDD" id="cd23933">
    <property type="entry name" value="ALDH_C"/>
    <property type="match status" value="1"/>
</dbReference>
<dbReference type="Gene3D" id="3.30.360.10">
    <property type="entry name" value="Dihydrodipicolinate Reductase, domain 2"/>
    <property type="match status" value="1"/>
</dbReference>
<dbReference type="Gene3D" id="3.40.50.720">
    <property type="entry name" value="NAD(P)-binding Rossmann-like Domain"/>
    <property type="match status" value="1"/>
</dbReference>
<dbReference type="HAMAP" id="MF_01657">
    <property type="entry name" value="Ac_ald_DH_ac"/>
    <property type="match status" value="1"/>
</dbReference>
<dbReference type="InterPro" id="IPR003361">
    <property type="entry name" value="Acetaldehyde_dehydrogenase"/>
</dbReference>
<dbReference type="InterPro" id="IPR015426">
    <property type="entry name" value="Acetylaldehyde_DH_C"/>
</dbReference>
<dbReference type="InterPro" id="IPR036291">
    <property type="entry name" value="NAD(P)-bd_dom_sf"/>
</dbReference>
<dbReference type="InterPro" id="IPR000534">
    <property type="entry name" value="Semialdehyde_DH_NAD-bd"/>
</dbReference>
<dbReference type="NCBIfam" id="TIGR03215">
    <property type="entry name" value="ac_ald_DH_ac"/>
    <property type="match status" value="1"/>
</dbReference>
<dbReference type="NCBIfam" id="NF006157">
    <property type="entry name" value="PRK08300.1"/>
    <property type="match status" value="1"/>
</dbReference>
<dbReference type="Pfam" id="PF09290">
    <property type="entry name" value="AcetDehyd-dimer"/>
    <property type="match status" value="1"/>
</dbReference>
<dbReference type="Pfam" id="PF01118">
    <property type="entry name" value="Semialdhyde_dh"/>
    <property type="match status" value="1"/>
</dbReference>
<dbReference type="PIRSF" id="PIRSF015689">
    <property type="entry name" value="Actaldh_dh_actl"/>
    <property type="match status" value="1"/>
</dbReference>
<dbReference type="SMART" id="SM00859">
    <property type="entry name" value="Semialdhyde_dh"/>
    <property type="match status" value="1"/>
</dbReference>
<dbReference type="SUPFAM" id="SSF55347">
    <property type="entry name" value="Glyceraldehyde-3-phosphate dehydrogenase-like, C-terminal domain"/>
    <property type="match status" value="1"/>
</dbReference>
<dbReference type="SUPFAM" id="SSF51735">
    <property type="entry name" value="NAD(P)-binding Rossmann-fold domains"/>
    <property type="match status" value="1"/>
</dbReference>
<sequence>MQADKVKVAILGSGNIGTDLMYKLLRQPGPMELALVAGIDPASEGLARARQLGIPTSASGIEAILADPEIRIVFDATSAKAHVRHARLLREHGRIAIDLTPAARGPYVVPPVNLGMHLDAPNVNLITCGGQATIPLVYAVSRVTPVRYAEMVSTVSSRSAGPGTRQNIDEFTFTTARGLEVIGGAHQAKAIIILNPANPPILMRNTIYVLPEGEFDETAVQNSVAQMVADVQQYVPGYRLKNRPVIERRATPWGERPVLIMLLEVEGAGDFLPRYAGNLDIMTSAARRVGEVFAQHILKEVAA</sequence>